<sequence length="107" mass="11891">MKNPLANLMQQAQRFQETFQKTQEEIAATEIQAESGGGLVKIRMNGKREVLKVEIDPSLRQEEHEVLEDLIAAAFNDGVRRVAKLKQEKMAGLTGSLGIPPGFNLPF</sequence>
<name>Y1327_METCA</name>
<keyword id="KW-0963">Cytoplasm</keyword>
<keyword id="KW-0238">DNA-binding</keyword>
<keyword id="KW-1185">Reference proteome</keyword>
<accession>Q609A8</accession>
<dbReference type="EMBL" id="AE017282">
    <property type="protein sequence ID" value="AAU92629.1"/>
    <property type="molecule type" value="Genomic_DNA"/>
</dbReference>
<dbReference type="RefSeq" id="WP_010960608.1">
    <property type="nucleotide sequence ID" value="NC_002977.6"/>
</dbReference>
<dbReference type="SMR" id="Q609A8"/>
<dbReference type="STRING" id="243233.MCA1327"/>
<dbReference type="GeneID" id="88223609"/>
<dbReference type="KEGG" id="mca:MCA1327"/>
<dbReference type="eggNOG" id="COG0718">
    <property type="taxonomic scope" value="Bacteria"/>
</dbReference>
<dbReference type="HOGENOM" id="CLU_140930_0_0_6"/>
<dbReference type="Proteomes" id="UP000006821">
    <property type="component" value="Chromosome"/>
</dbReference>
<dbReference type="GO" id="GO:0043590">
    <property type="term" value="C:bacterial nucleoid"/>
    <property type="evidence" value="ECO:0007669"/>
    <property type="project" value="UniProtKB-UniRule"/>
</dbReference>
<dbReference type="GO" id="GO:0005829">
    <property type="term" value="C:cytosol"/>
    <property type="evidence" value="ECO:0007669"/>
    <property type="project" value="TreeGrafter"/>
</dbReference>
<dbReference type="GO" id="GO:0003677">
    <property type="term" value="F:DNA binding"/>
    <property type="evidence" value="ECO:0007669"/>
    <property type="project" value="UniProtKB-UniRule"/>
</dbReference>
<dbReference type="Gene3D" id="3.30.1310.10">
    <property type="entry name" value="Nucleoid-associated protein YbaB-like domain"/>
    <property type="match status" value="1"/>
</dbReference>
<dbReference type="HAMAP" id="MF_00274">
    <property type="entry name" value="DNA_YbaB_EbfC"/>
    <property type="match status" value="1"/>
</dbReference>
<dbReference type="InterPro" id="IPR036894">
    <property type="entry name" value="YbaB-like_sf"/>
</dbReference>
<dbReference type="InterPro" id="IPR004401">
    <property type="entry name" value="YbaB/EbfC"/>
</dbReference>
<dbReference type="NCBIfam" id="TIGR00103">
    <property type="entry name" value="DNA_YbaB_EbfC"/>
    <property type="match status" value="1"/>
</dbReference>
<dbReference type="PANTHER" id="PTHR33449">
    <property type="entry name" value="NUCLEOID-ASSOCIATED PROTEIN YBAB"/>
    <property type="match status" value="1"/>
</dbReference>
<dbReference type="PANTHER" id="PTHR33449:SF1">
    <property type="entry name" value="NUCLEOID-ASSOCIATED PROTEIN YBAB"/>
    <property type="match status" value="1"/>
</dbReference>
<dbReference type="Pfam" id="PF02575">
    <property type="entry name" value="YbaB_DNA_bd"/>
    <property type="match status" value="1"/>
</dbReference>
<dbReference type="PIRSF" id="PIRSF004555">
    <property type="entry name" value="UCP004555"/>
    <property type="match status" value="1"/>
</dbReference>
<dbReference type="SUPFAM" id="SSF82607">
    <property type="entry name" value="YbaB-like"/>
    <property type="match status" value="1"/>
</dbReference>
<organism>
    <name type="scientific">Methylococcus capsulatus (strain ATCC 33009 / NCIMB 11132 / Bath)</name>
    <dbReference type="NCBI Taxonomy" id="243233"/>
    <lineage>
        <taxon>Bacteria</taxon>
        <taxon>Pseudomonadati</taxon>
        <taxon>Pseudomonadota</taxon>
        <taxon>Gammaproteobacteria</taxon>
        <taxon>Methylococcales</taxon>
        <taxon>Methylococcaceae</taxon>
        <taxon>Methylococcus</taxon>
    </lineage>
</organism>
<protein>
    <recommendedName>
        <fullName evidence="1">Nucleoid-associated protein MCA1327</fullName>
    </recommendedName>
</protein>
<proteinExistence type="inferred from homology"/>
<comment type="function">
    <text evidence="1">Binds to DNA and alters its conformation. May be involved in regulation of gene expression, nucleoid organization and DNA protection.</text>
</comment>
<comment type="subunit">
    <text evidence="1">Homodimer.</text>
</comment>
<comment type="subcellular location">
    <subcellularLocation>
        <location evidence="1">Cytoplasm</location>
        <location evidence="1">Nucleoid</location>
    </subcellularLocation>
</comment>
<comment type="similarity">
    <text evidence="1">Belongs to the YbaB/EbfC family.</text>
</comment>
<gene>
    <name type="ordered locus">MCA1327</name>
</gene>
<feature type="chain" id="PRO_1000003770" description="Nucleoid-associated protein MCA1327">
    <location>
        <begin position="1"/>
        <end position="107"/>
    </location>
</feature>
<reference key="1">
    <citation type="journal article" date="2004" name="PLoS Biol.">
        <title>Genomic insights into methanotrophy: the complete genome sequence of Methylococcus capsulatus (Bath).</title>
        <authorList>
            <person name="Ward N.L."/>
            <person name="Larsen O."/>
            <person name="Sakwa J."/>
            <person name="Bruseth L."/>
            <person name="Khouri H.M."/>
            <person name="Durkin A.S."/>
            <person name="Dimitrov G."/>
            <person name="Jiang L."/>
            <person name="Scanlan D."/>
            <person name="Kang K.H."/>
            <person name="Lewis M.R."/>
            <person name="Nelson K.E."/>
            <person name="Methe B.A."/>
            <person name="Wu M."/>
            <person name="Heidelberg J.F."/>
            <person name="Paulsen I.T."/>
            <person name="Fouts D.E."/>
            <person name="Ravel J."/>
            <person name="Tettelin H."/>
            <person name="Ren Q."/>
            <person name="Read T.D."/>
            <person name="DeBoy R.T."/>
            <person name="Seshadri R."/>
            <person name="Salzberg S.L."/>
            <person name="Jensen H.B."/>
            <person name="Birkeland N.K."/>
            <person name="Nelson W.C."/>
            <person name="Dodson R.J."/>
            <person name="Grindhaug S.H."/>
            <person name="Holt I.E."/>
            <person name="Eidhammer I."/>
            <person name="Jonasen I."/>
            <person name="Vanaken S."/>
            <person name="Utterback T.R."/>
            <person name="Feldblyum T.V."/>
            <person name="Fraser C.M."/>
            <person name="Lillehaug J.R."/>
            <person name="Eisen J.A."/>
        </authorList>
    </citation>
    <scope>NUCLEOTIDE SEQUENCE [LARGE SCALE GENOMIC DNA]</scope>
    <source>
        <strain>ATCC 33009 / NCIMB 11132 / Bath</strain>
    </source>
</reference>
<evidence type="ECO:0000255" key="1">
    <source>
        <dbReference type="HAMAP-Rule" id="MF_00274"/>
    </source>
</evidence>